<keyword id="KW-0687">Ribonucleoprotein</keyword>
<keyword id="KW-0689">Ribosomal protein</keyword>
<keyword id="KW-0694">RNA-binding</keyword>
<keyword id="KW-0699">rRNA-binding</keyword>
<dbReference type="EMBL" id="CP001138">
    <property type="protein sequence ID" value="ACH52594.1"/>
    <property type="molecule type" value="Genomic_DNA"/>
</dbReference>
<dbReference type="RefSeq" id="WP_000062611.1">
    <property type="nucleotide sequence ID" value="NC_011149.1"/>
</dbReference>
<dbReference type="SMR" id="B5F7T1"/>
<dbReference type="GeneID" id="93778681"/>
<dbReference type="KEGG" id="sea:SeAg_B3622"/>
<dbReference type="HOGENOM" id="CLU_098428_0_0_6"/>
<dbReference type="Proteomes" id="UP000008819">
    <property type="component" value="Chromosome"/>
</dbReference>
<dbReference type="GO" id="GO:1990904">
    <property type="term" value="C:ribonucleoprotein complex"/>
    <property type="evidence" value="ECO:0007669"/>
    <property type="project" value="UniProtKB-KW"/>
</dbReference>
<dbReference type="GO" id="GO:0005840">
    <property type="term" value="C:ribosome"/>
    <property type="evidence" value="ECO:0007669"/>
    <property type="project" value="UniProtKB-KW"/>
</dbReference>
<dbReference type="GO" id="GO:0019843">
    <property type="term" value="F:rRNA binding"/>
    <property type="evidence" value="ECO:0007669"/>
    <property type="project" value="UniProtKB-UniRule"/>
</dbReference>
<dbReference type="GO" id="GO:0003735">
    <property type="term" value="F:structural constituent of ribosome"/>
    <property type="evidence" value="ECO:0007669"/>
    <property type="project" value="InterPro"/>
</dbReference>
<dbReference type="GO" id="GO:0006412">
    <property type="term" value="P:translation"/>
    <property type="evidence" value="ECO:0007669"/>
    <property type="project" value="UniProtKB-UniRule"/>
</dbReference>
<dbReference type="FunFam" id="3.30.1370.30:FF:000003">
    <property type="entry name" value="30S ribosomal protein S8"/>
    <property type="match status" value="1"/>
</dbReference>
<dbReference type="FunFam" id="3.30.1490.10:FF:000001">
    <property type="entry name" value="30S ribosomal protein S8"/>
    <property type="match status" value="1"/>
</dbReference>
<dbReference type="Gene3D" id="3.30.1370.30">
    <property type="match status" value="1"/>
</dbReference>
<dbReference type="Gene3D" id="3.30.1490.10">
    <property type="match status" value="1"/>
</dbReference>
<dbReference type="HAMAP" id="MF_01302_B">
    <property type="entry name" value="Ribosomal_uS8_B"/>
    <property type="match status" value="1"/>
</dbReference>
<dbReference type="InterPro" id="IPR000630">
    <property type="entry name" value="Ribosomal_uS8"/>
</dbReference>
<dbReference type="InterPro" id="IPR047863">
    <property type="entry name" value="Ribosomal_uS8_CS"/>
</dbReference>
<dbReference type="InterPro" id="IPR035987">
    <property type="entry name" value="Ribosomal_uS8_sf"/>
</dbReference>
<dbReference type="NCBIfam" id="NF001109">
    <property type="entry name" value="PRK00136.1"/>
    <property type="match status" value="1"/>
</dbReference>
<dbReference type="PANTHER" id="PTHR11758">
    <property type="entry name" value="40S RIBOSOMAL PROTEIN S15A"/>
    <property type="match status" value="1"/>
</dbReference>
<dbReference type="Pfam" id="PF00410">
    <property type="entry name" value="Ribosomal_S8"/>
    <property type="match status" value="1"/>
</dbReference>
<dbReference type="SUPFAM" id="SSF56047">
    <property type="entry name" value="Ribosomal protein S8"/>
    <property type="match status" value="1"/>
</dbReference>
<dbReference type="PROSITE" id="PS00053">
    <property type="entry name" value="RIBOSOMAL_S8"/>
    <property type="match status" value="1"/>
</dbReference>
<gene>
    <name evidence="1" type="primary">rpsH</name>
    <name type="ordered locus">SeAg_B3622</name>
</gene>
<comment type="function">
    <text evidence="1">One of the primary rRNA binding proteins, it binds directly to 16S rRNA central domain where it helps coordinate assembly of the platform of the 30S subunit.</text>
</comment>
<comment type="subunit">
    <text evidence="1">Part of the 30S ribosomal subunit. Contacts proteins S5 and S12.</text>
</comment>
<comment type="similarity">
    <text evidence="1">Belongs to the universal ribosomal protein uS8 family.</text>
</comment>
<evidence type="ECO:0000255" key="1">
    <source>
        <dbReference type="HAMAP-Rule" id="MF_01302"/>
    </source>
</evidence>
<evidence type="ECO:0000305" key="2"/>
<proteinExistence type="inferred from homology"/>
<feature type="chain" id="PRO_1000140604" description="Small ribosomal subunit protein uS8">
    <location>
        <begin position="1"/>
        <end position="130"/>
    </location>
</feature>
<sequence length="130" mass="14127">MSMQDPIADMLTRIRNGQAANKAAVTMPSSKLKVAIANVLKEEGFIEDFKVEGDTKPELELTLKYFQGKAVVESIQRVSRPGLRIYKRKDELPKVMAGLGIAVVSTSKGVMTDRAARQAGLGGEIICYVA</sequence>
<protein>
    <recommendedName>
        <fullName evidence="1">Small ribosomal subunit protein uS8</fullName>
    </recommendedName>
    <alternativeName>
        <fullName evidence="2">30S ribosomal protein S8</fullName>
    </alternativeName>
</protein>
<organism>
    <name type="scientific">Salmonella agona (strain SL483)</name>
    <dbReference type="NCBI Taxonomy" id="454166"/>
    <lineage>
        <taxon>Bacteria</taxon>
        <taxon>Pseudomonadati</taxon>
        <taxon>Pseudomonadota</taxon>
        <taxon>Gammaproteobacteria</taxon>
        <taxon>Enterobacterales</taxon>
        <taxon>Enterobacteriaceae</taxon>
        <taxon>Salmonella</taxon>
    </lineage>
</organism>
<name>RS8_SALA4</name>
<reference key="1">
    <citation type="journal article" date="2011" name="J. Bacteriol.">
        <title>Comparative genomics of 28 Salmonella enterica isolates: evidence for CRISPR-mediated adaptive sublineage evolution.</title>
        <authorList>
            <person name="Fricke W.F."/>
            <person name="Mammel M.K."/>
            <person name="McDermott P.F."/>
            <person name="Tartera C."/>
            <person name="White D.G."/>
            <person name="Leclerc J.E."/>
            <person name="Ravel J."/>
            <person name="Cebula T.A."/>
        </authorList>
    </citation>
    <scope>NUCLEOTIDE SEQUENCE [LARGE SCALE GENOMIC DNA]</scope>
    <source>
        <strain>SL483</strain>
    </source>
</reference>
<accession>B5F7T1</accession>